<accession>A1WW05</accession>
<gene>
    <name evidence="1" type="primary">hisF</name>
    <name type="ordered locus">Hhal_1091</name>
</gene>
<organism>
    <name type="scientific">Halorhodospira halophila (strain DSM 244 / SL1)</name>
    <name type="common">Ectothiorhodospira halophila (strain DSM 244 / SL1)</name>
    <dbReference type="NCBI Taxonomy" id="349124"/>
    <lineage>
        <taxon>Bacteria</taxon>
        <taxon>Pseudomonadati</taxon>
        <taxon>Pseudomonadota</taxon>
        <taxon>Gammaproteobacteria</taxon>
        <taxon>Chromatiales</taxon>
        <taxon>Ectothiorhodospiraceae</taxon>
        <taxon>Halorhodospira</taxon>
    </lineage>
</organism>
<dbReference type="EC" id="4.3.2.10" evidence="1"/>
<dbReference type="EMBL" id="CP000544">
    <property type="protein sequence ID" value="ABM61867.1"/>
    <property type="molecule type" value="Genomic_DNA"/>
</dbReference>
<dbReference type="RefSeq" id="WP_011813890.1">
    <property type="nucleotide sequence ID" value="NC_008789.1"/>
</dbReference>
<dbReference type="SMR" id="A1WW05"/>
<dbReference type="STRING" id="349124.Hhal_1091"/>
<dbReference type="KEGG" id="hha:Hhal_1091"/>
<dbReference type="eggNOG" id="COG0107">
    <property type="taxonomic scope" value="Bacteria"/>
</dbReference>
<dbReference type="HOGENOM" id="CLU_048577_4_0_6"/>
<dbReference type="OrthoDB" id="9781903at2"/>
<dbReference type="UniPathway" id="UPA00031">
    <property type="reaction ID" value="UER00010"/>
</dbReference>
<dbReference type="Proteomes" id="UP000000647">
    <property type="component" value="Chromosome"/>
</dbReference>
<dbReference type="GO" id="GO:0005737">
    <property type="term" value="C:cytoplasm"/>
    <property type="evidence" value="ECO:0007669"/>
    <property type="project" value="UniProtKB-SubCell"/>
</dbReference>
<dbReference type="GO" id="GO:0000107">
    <property type="term" value="F:imidazoleglycerol-phosphate synthase activity"/>
    <property type="evidence" value="ECO:0007669"/>
    <property type="project" value="UniProtKB-UniRule"/>
</dbReference>
<dbReference type="GO" id="GO:0016829">
    <property type="term" value="F:lyase activity"/>
    <property type="evidence" value="ECO:0007669"/>
    <property type="project" value="UniProtKB-KW"/>
</dbReference>
<dbReference type="GO" id="GO:0000105">
    <property type="term" value="P:L-histidine biosynthetic process"/>
    <property type="evidence" value="ECO:0007669"/>
    <property type="project" value="UniProtKB-UniRule"/>
</dbReference>
<dbReference type="CDD" id="cd04731">
    <property type="entry name" value="HisF"/>
    <property type="match status" value="1"/>
</dbReference>
<dbReference type="FunFam" id="3.20.20.70:FF:000006">
    <property type="entry name" value="Imidazole glycerol phosphate synthase subunit HisF"/>
    <property type="match status" value="1"/>
</dbReference>
<dbReference type="Gene3D" id="3.20.20.70">
    <property type="entry name" value="Aldolase class I"/>
    <property type="match status" value="1"/>
</dbReference>
<dbReference type="HAMAP" id="MF_01013">
    <property type="entry name" value="HisF"/>
    <property type="match status" value="1"/>
</dbReference>
<dbReference type="InterPro" id="IPR013785">
    <property type="entry name" value="Aldolase_TIM"/>
</dbReference>
<dbReference type="InterPro" id="IPR006062">
    <property type="entry name" value="His_biosynth"/>
</dbReference>
<dbReference type="InterPro" id="IPR004651">
    <property type="entry name" value="HisF"/>
</dbReference>
<dbReference type="InterPro" id="IPR050064">
    <property type="entry name" value="IGPS_HisA/HisF"/>
</dbReference>
<dbReference type="InterPro" id="IPR011060">
    <property type="entry name" value="RibuloseP-bd_barrel"/>
</dbReference>
<dbReference type="NCBIfam" id="TIGR00735">
    <property type="entry name" value="hisF"/>
    <property type="match status" value="1"/>
</dbReference>
<dbReference type="PANTHER" id="PTHR21235:SF2">
    <property type="entry name" value="IMIDAZOLE GLYCEROL PHOSPHATE SYNTHASE HISHF"/>
    <property type="match status" value="1"/>
</dbReference>
<dbReference type="PANTHER" id="PTHR21235">
    <property type="entry name" value="IMIDAZOLE GLYCEROL PHOSPHATE SYNTHASE SUBUNIT HISF/H IGP SYNTHASE SUBUNIT HISF/H"/>
    <property type="match status" value="1"/>
</dbReference>
<dbReference type="Pfam" id="PF00977">
    <property type="entry name" value="His_biosynth"/>
    <property type="match status" value="1"/>
</dbReference>
<dbReference type="SUPFAM" id="SSF51366">
    <property type="entry name" value="Ribulose-phoshate binding barrel"/>
    <property type="match status" value="1"/>
</dbReference>
<keyword id="KW-0028">Amino-acid biosynthesis</keyword>
<keyword id="KW-0963">Cytoplasm</keyword>
<keyword id="KW-0368">Histidine biosynthesis</keyword>
<keyword id="KW-0456">Lyase</keyword>
<keyword id="KW-1185">Reference proteome</keyword>
<feature type="chain" id="PRO_1000063068" description="Imidazole glycerol phosphate synthase subunit HisF">
    <location>
        <begin position="1"/>
        <end position="254"/>
    </location>
</feature>
<feature type="active site" evidence="1">
    <location>
        <position position="11"/>
    </location>
</feature>
<feature type="active site" evidence="1">
    <location>
        <position position="130"/>
    </location>
</feature>
<name>HIS6_HALHL</name>
<proteinExistence type="inferred from homology"/>
<protein>
    <recommendedName>
        <fullName evidence="1">Imidazole glycerol phosphate synthase subunit HisF</fullName>
        <ecNumber evidence="1">4.3.2.10</ecNumber>
    </recommendedName>
    <alternativeName>
        <fullName evidence="1">IGP synthase cyclase subunit</fullName>
    </alternativeName>
    <alternativeName>
        <fullName evidence="1">IGP synthase subunit HisF</fullName>
    </alternativeName>
    <alternativeName>
        <fullName evidence="1">ImGP synthase subunit HisF</fullName>
        <shortName evidence="1">IGPS subunit HisF</shortName>
    </alternativeName>
</protein>
<reference key="1">
    <citation type="submission" date="2006-12" db="EMBL/GenBank/DDBJ databases">
        <title>Complete sequence of Halorhodospira halophila SL1.</title>
        <authorList>
            <consortium name="US DOE Joint Genome Institute"/>
            <person name="Copeland A."/>
            <person name="Lucas S."/>
            <person name="Lapidus A."/>
            <person name="Barry K."/>
            <person name="Detter J.C."/>
            <person name="Glavina del Rio T."/>
            <person name="Hammon N."/>
            <person name="Israni S."/>
            <person name="Dalin E."/>
            <person name="Tice H."/>
            <person name="Pitluck S."/>
            <person name="Saunders E."/>
            <person name="Brettin T."/>
            <person name="Bruce D."/>
            <person name="Han C."/>
            <person name="Tapia R."/>
            <person name="Schmutz J."/>
            <person name="Larimer F."/>
            <person name="Land M."/>
            <person name="Hauser L."/>
            <person name="Kyrpides N."/>
            <person name="Mikhailova N."/>
            <person name="Hoff W."/>
            <person name="Richardson P."/>
        </authorList>
    </citation>
    <scope>NUCLEOTIDE SEQUENCE [LARGE SCALE GENOMIC DNA]</scope>
    <source>
        <strain>DSM 244 / SL1</strain>
    </source>
</reference>
<comment type="function">
    <text evidence="1">IGPS catalyzes the conversion of PRFAR and glutamine to IGP, AICAR and glutamate. The HisF subunit catalyzes the cyclization activity that produces IGP and AICAR from PRFAR using the ammonia provided by the HisH subunit.</text>
</comment>
<comment type="catalytic activity">
    <reaction evidence="1">
        <text>5-[(5-phospho-1-deoxy-D-ribulos-1-ylimino)methylamino]-1-(5-phospho-beta-D-ribosyl)imidazole-4-carboxamide + L-glutamine = D-erythro-1-(imidazol-4-yl)glycerol 3-phosphate + 5-amino-1-(5-phospho-beta-D-ribosyl)imidazole-4-carboxamide + L-glutamate + H(+)</text>
        <dbReference type="Rhea" id="RHEA:24793"/>
        <dbReference type="ChEBI" id="CHEBI:15378"/>
        <dbReference type="ChEBI" id="CHEBI:29985"/>
        <dbReference type="ChEBI" id="CHEBI:58278"/>
        <dbReference type="ChEBI" id="CHEBI:58359"/>
        <dbReference type="ChEBI" id="CHEBI:58475"/>
        <dbReference type="ChEBI" id="CHEBI:58525"/>
        <dbReference type="EC" id="4.3.2.10"/>
    </reaction>
</comment>
<comment type="pathway">
    <text evidence="1">Amino-acid biosynthesis; L-histidine biosynthesis; L-histidine from 5-phospho-alpha-D-ribose 1-diphosphate: step 5/9.</text>
</comment>
<comment type="subunit">
    <text evidence="1">Heterodimer of HisH and HisF.</text>
</comment>
<comment type="subcellular location">
    <subcellularLocation>
        <location evidence="1">Cytoplasm</location>
    </subcellularLocation>
</comment>
<comment type="similarity">
    <text evidence="1">Belongs to the HisA/HisF family.</text>
</comment>
<sequence>MTAKRIIPCLDVDAGRVVKGVRFVDIRDAGDPVEIARRYDAMGADELTFLDITASHEERETIYDVVEAVAGQVFIPLTVGGGVRSVADVRRLLNAGADKVAINTAAVHRPDFVREAAERFGSQCIVVAVDAKQVEDDPPRWEVFTHGGRNPTGLEVVSWCQRLVALGAGEILLTSMDRDGTRAGFDLGLTRAVADAVSVPVIASGGVGELEHLADGVDDGGADAVLAASIFHFGDHTVGEAKAHMAERGIEVRR</sequence>
<evidence type="ECO:0000255" key="1">
    <source>
        <dbReference type="HAMAP-Rule" id="MF_01013"/>
    </source>
</evidence>